<sequence>MGQTSVSALSPQPGSVDGLDKASIANSDGPPAGSQTPPFKRKGKLSTIGKIFKPWKWRKEKTSDKFRETSAVLERKISTRQSREELIRRGLLKELPDQDGDVTVNFENSNGHMIHIGEEATQEENVGKPEEGNVSVCEKGPPREEQAEEKTAGSSHPKKTTGSKASSSPSASSTSSHPRGPKESLTGKAGAVGTTRGKKKISKQPAAAASRLSPNTVTSETSSLKGELSDTGVESLKPEETVAGAEEEATGKPKAVVVALPPVTVPPSSPALPLPPEDPCTIALDTPMVLVSDGPTLPISALETSPLPGTEEPANRTTPYSSTGLGGSREQAKCFTTKDGLGKAGPQLLTPGQMGDSLESFSAPEDEAPREYQANDSDSDGPILYTDDDDEEDDDDDSTGESALASKIRRRDTLAIKLGNRPSKKELEDKNILQRTSEEERQELRQQIGTKLVRRLSQRPTTEELEQRSILKQKNEEEEQEAKMELKRRLSRKLSLRPTVPELQARRILRFNEYVEVTDSPDYDRRADKPWARLTPADKAAIRKELNEFKSTEMEVHEESRQFTRFHRP</sequence>
<dbReference type="EMBL" id="AY500158">
    <property type="protein sequence ID" value="AAS86432.1"/>
    <property type="molecule type" value="mRNA"/>
</dbReference>
<dbReference type="RefSeq" id="NP_999623.1">
    <property type="nucleotide sequence ID" value="NM_214458.1"/>
</dbReference>
<dbReference type="SMR" id="P62025"/>
<dbReference type="FunCoup" id="P62025">
    <property type="interactions" value="739"/>
</dbReference>
<dbReference type="STRING" id="10116.ENSRNOP00000045608"/>
<dbReference type="iPTMnet" id="P62025"/>
<dbReference type="PhosphoSitePlus" id="P62025"/>
<dbReference type="PaxDb" id="10116-ENSRNOP00000045608"/>
<dbReference type="GeneID" id="308291"/>
<dbReference type="KEGG" id="rno:308291"/>
<dbReference type="UCSC" id="RGD:1303141">
    <property type="organism name" value="rat"/>
</dbReference>
<dbReference type="AGR" id="RGD:1303141"/>
<dbReference type="CTD" id="9749"/>
<dbReference type="RGD" id="1303141">
    <property type="gene designation" value="Phactr2"/>
</dbReference>
<dbReference type="eggNOG" id="KOG4339">
    <property type="taxonomic scope" value="Eukaryota"/>
</dbReference>
<dbReference type="InParanoid" id="P62025"/>
<dbReference type="OrthoDB" id="5563016at2759"/>
<dbReference type="PhylomeDB" id="P62025"/>
<dbReference type="Reactome" id="R-RNO-114608">
    <property type="pathway name" value="Platelet degranulation"/>
</dbReference>
<dbReference type="PRO" id="PR:P62025"/>
<dbReference type="Proteomes" id="UP000002494">
    <property type="component" value="Unplaced"/>
</dbReference>
<dbReference type="GO" id="GO:0003779">
    <property type="term" value="F:actin binding"/>
    <property type="evidence" value="ECO:0000318"/>
    <property type="project" value="GO_Central"/>
</dbReference>
<dbReference type="GO" id="GO:0004864">
    <property type="term" value="F:protein phosphatase inhibitor activity"/>
    <property type="evidence" value="ECO:0007669"/>
    <property type="project" value="UniProtKB-KW"/>
</dbReference>
<dbReference type="GO" id="GO:0030036">
    <property type="term" value="P:actin cytoskeleton organization"/>
    <property type="evidence" value="ECO:0000318"/>
    <property type="project" value="GO_Central"/>
</dbReference>
<dbReference type="Gene3D" id="6.10.140.1750">
    <property type="match status" value="1"/>
</dbReference>
<dbReference type="Gene3D" id="6.10.140.2130">
    <property type="match status" value="1"/>
</dbReference>
<dbReference type="InterPro" id="IPR004018">
    <property type="entry name" value="RPEL_repeat"/>
</dbReference>
<dbReference type="PANTHER" id="PTHR12751:SF5">
    <property type="entry name" value="PHOSPHATASE AND ACTIN REGULATOR 2"/>
    <property type="match status" value="1"/>
</dbReference>
<dbReference type="PANTHER" id="PTHR12751">
    <property type="entry name" value="PHOSPHATASE AND ACTIN REGULATOR PHACTR"/>
    <property type="match status" value="1"/>
</dbReference>
<dbReference type="Pfam" id="PF02755">
    <property type="entry name" value="RPEL"/>
    <property type="match status" value="1"/>
</dbReference>
<dbReference type="SMART" id="SM00707">
    <property type="entry name" value="RPEL"/>
    <property type="match status" value="4"/>
</dbReference>
<dbReference type="PROSITE" id="PS51073">
    <property type="entry name" value="RPEL"/>
    <property type="match status" value="4"/>
</dbReference>
<comment type="subunit">
    <text>Binds PPP1CA and actin.</text>
</comment>
<comment type="tissue specificity">
    <text evidence="3">Expressed in the brain with high levels in the cerebellum, specifically in the Purkinje cell layer, choroid plexus and thalamus (ventral, rhomboid and anterior nuclei). Moderate to high expression in the hippocampus, piriform cortex, olfactory bulb, entorhinal cortex, as well as in geniculate bodies, lamboid septal zone, preoptic area and ventral pallidum (at protein level).</text>
</comment>
<comment type="similarity">
    <text evidence="4">Belongs to the phosphatase and actin regulator family.</text>
</comment>
<evidence type="ECO:0000250" key="1">
    <source>
        <dbReference type="UniProtKB" id="O75167"/>
    </source>
</evidence>
<evidence type="ECO:0000256" key="2">
    <source>
        <dbReference type="SAM" id="MobiDB-lite"/>
    </source>
</evidence>
<evidence type="ECO:0000269" key="3">
    <source>
    </source>
</evidence>
<evidence type="ECO:0000305" key="4"/>
<evidence type="ECO:0007744" key="5">
    <source>
    </source>
</evidence>
<evidence type="ECO:0007744" key="6">
    <source>
    </source>
</evidence>
<name>PHAR2_RAT</name>
<organism>
    <name type="scientific">Rattus norvegicus</name>
    <name type="common">Rat</name>
    <dbReference type="NCBI Taxonomy" id="10116"/>
    <lineage>
        <taxon>Eukaryota</taxon>
        <taxon>Metazoa</taxon>
        <taxon>Chordata</taxon>
        <taxon>Craniata</taxon>
        <taxon>Vertebrata</taxon>
        <taxon>Euteleostomi</taxon>
        <taxon>Mammalia</taxon>
        <taxon>Eutheria</taxon>
        <taxon>Euarchontoglires</taxon>
        <taxon>Glires</taxon>
        <taxon>Rodentia</taxon>
        <taxon>Myomorpha</taxon>
        <taxon>Muroidea</taxon>
        <taxon>Muridae</taxon>
        <taxon>Murinae</taxon>
        <taxon>Rattus</taxon>
    </lineage>
</organism>
<protein>
    <recommendedName>
        <fullName>Phosphatase and actin regulator 2</fullName>
    </recommendedName>
</protein>
<gene>
    <name type="primary">Phactr2</name>
</gene>
<proteinExistence type="evidence at protein level"/>
<accession>P62025</accession>
<keyword id="KW-0009">Actin-binding</keyword>
<keyword id="KW-0597">Phosphoprotein</keyword>
<keyword id="KW-0650">Protein phosphatase inhibitor</keyword>
<keyword id="KW-1185">Reference proteome</keyword>
<keyword id="KW-0677">Repeat</keyword>
<reference key="1">
    <citation type="journal article" date="2004" name="Proc. Natl. Acad. Sci. U.S.A.">
        <title>Phactrs 1-4: a family of protein phosphatase 1 and actin regulatory proteins.</title>
        <authorList>
            <person name="Allen P.B."/>
            <person name="Greenfield A.T."/>
            <person name="Svenningsson P."/>
            <person name="Haspeslagh D.C."/>
            <person name="Greengard P."/>
        </authorList>
    </citation>
    <scope>NUCLEOTIDE SEQUENCE [MRNA]</scope>
    <scope>INTERACTION WITH PPP1CA AND ACTIN</scope>
    <scope>TISSUE SPECIFICITY</scope>
    <source>
        <strain>Sprague-Dawley</strain>
    </source>
</reference>
<reference key="2">
    <citation type="journal article" date="2006" name="Proc. Natl. Acad. Sci. U.S.A.">
        <title>Quantitative phosphoproteomics of vasopressin-sensitive renal cells: regulation of aquaporin-2 phosphorylation at two sites.</title>
        <authorList>
            <person name="Hoffert J.D."/>
            <person name="Pisitkun T."/>
            <person name="Wang G."/>
            <person name="Shen R.-F."/>
            <person name="Knepper M.A."/>
        </authorList>
    </citation>
    <scope>PHOSPHORYLATION [LARGE SCALE ANALYSIS] AT SER-457</scope>
    <scope>IDENTIFICATION BY MASS SPECTROMETRY [LARGE SCALE ANALYSIS]</scope>
</reference>
<reference key="3">
    <citation type="journal article" date="2012" name="Nat. Commun.">
        <title>Quantitative maps of protein phosphorylation sites across 14 different rat organs and tissues.</title>
        <authorList>
            <person name="Lundby A."/>
            <person name="Secher A."/>
            <person name="Lage K."/>
            <person name="Nordsborg N.B."/>
            <person name="Dmytriyev A."/>
            <person name="Lundby C."/>
            <person name="Olsen J.V."/>
        </authorList>
    </citation>
    <scope>PHOSPHORYLATION [LARGE SCALE ANALYSIS] AT SER-27 AND SER-357</scope>
    <scope>IDENTIFICATION BY MASS SPECTROMETRY [LARGE SCALE ANALYSIS]</scope>
</reference>
<feature type="chain" id="PRO_0000126637" description="Phosphatase and actin regulator 2">
    <location>
        <begin position="1"/>
        <end position="569"/>
    </location>
</feature>
<feature type="repeat" description="RPEL 1">
    <location>
        <begin position="71"/>
        <end position="96"/>
    </location>
</feature>
<feature type="repeat" description="RPEL 2">
    <location>
        <begin position="412"/>
        <end position="437"/>
    </location>
</feature>
<feature type="repeat" description="RPEL 3">
    <location>
        <begin position="450"/>
        <end position="475"/>
    </location>
</feature>
<feature type="repeat" description="RPEL 4">
    <location>
        <begin position="488"/>
        <end position="513"/>
    </location>
</feature>
<feature type="region of interest" description="Disordered" evidence="2">
    <location>
        <begin position="1"/>
        <end position="47"/>
    </location>
</feature>
<feature type="region of interest" description="Disordered" evidence="2">
    <location>
        <begin position="98"/>
        <end position="253"/>
    </location>
</feature>
<feature type="region of interest" description="Disordered" evidence="2">
    <location>
        <begin position="295"/>
        <end position="483"/>
    </location>
</feature>
<feature type="compositionally biased region" description="Polar residues" evidence="2">
    <location>
        <begin position="1"/>
        <end position="13"/>
    </location>
</feature>
<feature type="compositionally biased region" description="Basic and acidic residues" evidence="2">
    <location>
        <begin position="140"/>
        <end position="151"/>
    </location>
</feature>
<feature type="compositionally biased region" description="Low complexity" evidence="2">
    <location>
        <begin position="162"/>
        <end position="176"/>
    </location>
</feature>
<feature type="compositionally biased region" description="Polar residues" evidence="2">
    <location>
        <begin position="212"/>
        <end position="224"/>
    </location>
</feature>
<feature type="compositionally biased region" description="Acidic residues" evidence="2">
    <location>
        <begin position="386"/>
        <end position="399"/>
    </location>
</feature>
<feature type="compositionally biased region" description="Basic and acidic residues" evidence="2">
    <location>
        <begin position="423"/>
        <end position="444"/>
    </location>
</feature>
<feature type="compositionally biased region" description="Basic and acidic residues" evidence="2">
    <location>
        <begin position="461"/>
        <end position="483"/>
    </location>
</feature>
<feature type="modified residue" description="Phosphoserine" evidence="6">
    <location>
        <position position="27"/>
    </location>
</feature>
<feature type="modified residue" description="Phosphothreonine" evidence="1">
    <location>
        <position position="36"/>
    </location>
</feature>
<feature type="modified residue" description="Phosphoserine" evidence="6">
    <location>
        <position position="357"/>
    </location>
</feature>
<feature type="modified residue" description="Phosphoserine" evidence="5">
    <location>
        <position position="457"/>
    </location>
</feature>
<feature type="modified residue" description="Phosphoserine" evidence="1">
    <location>
        <position position="495"/>
    </location>
</feature>